<protein>
    <recommendedName>
        <fullName evidence="1">Small ribosomal subunit protein uS10</fullName>
    </recommendedName>
    <alternativeName>
        <fullName evidence="2">30S ribosomal protein S10</fullName>
    </alternativeName>
</protein>
<reference key="1">
    <citation type="submission" date="2009-07" db="EMBL/GenBank/DDBJ databases">
        <title>Complete sequence of Geobacter sp. M21.</title>
        <authorList>
            <consortium name="US DOE Joint Genome Institute"/>
            <person name="Lucas S."/>
            <person name="Copeland A."/>
            <person name="Lapidus A."/>
            <person name="Glavina del Rio T."/>
            <person name="Dalin E."/>
            <person name="Tice H."/>
            <person name="Bruce D."/>
            <person name="Goodwin L."/>
            <person name="Pitluck S."/>
            <person name="Saunders E."/>
            <person name="Brettin T."/>
            <person name="Detter J.C."/>
            <person name="Han C."/>
            <person name="Larimer F."/>
            <person name="Land M."/>
            <person name="Hauser L."/>
            <person name="Kyrpides N."/>
            <person name="Ovchinnikova G."/>
            <person name="Lovley D."/>
        </authorList>
    </citation>
    <scope>NUCLEOTIDE SEQUENCE [LARGE SCALE GENOMIC DNA]</scope>
    <source>
        <strain>M21</strain>
    </source>
</reference>
<feature type="chain" id="PRO_1000206587" description="Small ribosomal subunit protein uS10">
    <location>
        <begin position="1"/>
        <end position="102"/>
    </location>
</feature>
<organism>
    <name type="scientific">Geobacter sp. (strain M21)</name>
    <dbReference type="NCBI Taxonomy" id="443144"/>
    <lineage>
        <taxon>Bacteria</taxon>
        <taxon>Pseudomonadati</taxon>
        <taxon>Thermodesulfobacteriota</taxon>
        <taxon>Desulfuromonadia</taxon>
        <taxon>Geobacterales</taxon>
        <taxon>Geobacteraceae</taxon>
        <taxon>Geobacter</taxon>
    </lineage>
</organism>
<sequence>MPSQKIRIRLKAYDHKLLDTSVGEIVDTAKRTGARVAGPIPLPTVINKYCVLRGPHVDKKSREQFEIRTHKRLIDILEPTQQTVDALMKLDLSAGVDVEIKL</sequence>
<comment type="function">
    <text evidence="1">Involved in the binding of tRNA to the ribosomes.</text>
</comment>
<comment type="subunit">
    <text evidence="1">Part of the 30S ribosomal subunit.</text>
</comment>
<comment type="similarity">
    <text evidence="1">Belongs to the universal ribosomal protein uS10 family.</text>
</comment>
<name>RS10_GEOSM</name>
<keyword id="KW-0687">Ribonucleoprotein</keyword>
<keyword id="KW-0689">Ribosomal protein</keyword>
<proteinExistence type="inferred from homology"/>
<dbReference type="EMBL" id="CP001661">
    <property type="protein sequence ID" value="ACT19354.1"/>
    <property type="molecule type" value="Genomic_DNA"/>
</dbReference>
<dbReference type="SMR" id="C6E4Q8"/>
<dbReference type="STRING" id="443144.GM21_3329"/>
<dbReference type="KEGG" id="gem:GM21_3329"/>
<dbReference type="eggNOG" id="COG0051">
    <property type="taxonomic scope" value="Bacteria"/>
</dbReference>
<dbReference type="HOGENOM" id="CLU_122625_1_3_7"/>
<dbReference type="OrthoDB" id="9804464at2"/>
<dbReference type="GO" id="GO:1990904">
    <property type="term" value="C:ribonucleoprotein complex"/>
    <property type="evidence" value="ECO:0007669"/>
    <property type="project" value="UniProtKB-KW"/>
</dbReference>
<dbReference type="GO" id="GO:0005840">
    <property type="term" value="C:ribosome"/>
    <property type="evidence" value="ECO:0007669"/>
    <property type="project" value="UniProtKB-KW"/>
</dbReference>
<dbReference type="GO" id="GO:0003735">
    <property type="term" value="F:structural constituent of ribosome"/>
    <property type="evidence" value="ECO:0007669"/>
    <property type="project" value="InterPro"/>
</dbReference>
<dbReference type="GO" id="GO:0000049">
    <property type="term" value="F:tRNA binding"/>
    <property type="evidence" value="ECO:0007669"/>
    <property type="project" value="UniProtKB-UniRule"/>
</dbReference>
<dbReference type="GO" id="GO:0006412">
    <property type="term" value="P:translation"/>
    <property type="evidence" value="ECO:0007669"/>
    <property type="project" value="UniProtKB-UniRule"/>
</dbReference>
<dbReference type="FunFam" id="3.30.70.600:FF:000001">
    <property type="entry name" value="30S ribosomal protein S10"/>
    <property type="match status" value="1"/>
</dbReference>
<dbReference type="Gene3D" id="3.30.70.600">
    <property type="entry name" value="Ribosomal protein S10 domain"/>
    <property type="match status" value="1"/>
</dbReference>
<dbReference type="HAMAP" id="MF_00508">
    <property type="entry name" value="Ribosomal_uS10"/>
    <property type="match status" value="1"/>
</dbReference>
<dbReference type="InterPro" id="IPR001848">
    <property type="entry name" value="Ribosomal_uS10"/>
</dbReference>
<dbReference type="InterPro" id="IPR018268">
    <property type="entry name" value="Ribosomal_uS10_CS"/>
</dbReference>
<dbReference type="InterPro" id="IPR027486">
    <property type="entry name" value="Ribosomal_uS10_dom"/>
</dbReference>
<dbReference type="InterPro" id="IPR036838">
    <property type="entry name" value="Ribosomal_uS10_dom_sf"/>
</dbReference>
<dbReference type="NCBIfam" id="NF001861">
    <property type="entry name" value="PRK00596.1"/>
    <property type="match status" value="1"/>
</dbReference>
<dbReference type="NCBIfam" id="TIGR01049">
    <property type="entry name" value="rpsJ_bact"/>
    <property type="match status" value="1"/>
</dbReference>
<dbReference type="PANTHER" id="PTHR11700">
    <property type="entry name" value="30S RIBOSOMAL PROTEIN S10 FAMILY MEMBER"/>
    <property type="match status" value="1"/>
</dbReference>
<dbReference type="Pfam" id="PF00338">
    <property type="entry name" value="Ribosomal_S10"/>
    <property type="match status" value="1"/>
</dbReference>
<dbReference type="PRINTS" id="PR00971">
    <property type="entry name" value="RIBOSOMALS10"/>
</dbReference>
<dbReference type="SMART" id="SM01403">
    <property type="entry name" value="Ribosomal_S10"/>
    <property type="match status" value="1"/>
</dbReference>
<dbReference type="SUPFAM" id="SSF54999">
    <property type="entry name" value="Ribosomal protein S10"/>
    <property type="match status" value="1"/>
</dbReference>
<dbReference type="PROSITE" id="PS00361">
    <property type="entry name" value="RIBOSOMAL_S10"/>
    <property type="match status" value="1"/>
</dbReference>
<gene>
    <name evidence="1" type="primary">rpsJ</name>
    <name type="ordered locus">GM21_3329</name>
</gene>
<evidence type="ECO:0000255" key="1">
    <source>
        <dbReference type="HAMAP-Rule" id="MF_00508"/>
    </source>
</evidence>
<evidence type="ECO:0000305" key="2"/>
<accession>C6E4Q8</accession>